<dbReference type="EC" id="3.5.4.19" evidence="1"/>
<dbReference type="EMBL" id="CP000463">
    <property type="protein sequence ID" value="ABJ06289.1"/>
    <property type="molecule type" value="Genomic_DNA"/>
</dbReference>
<dbReference type="SMR" id="Q07P45"/>
<dbReference type="STRING" id="316055.RPE_2349"/>
<dbReference type="KEGG" id="rpe:RPE_2349"/>
<dbReference type="eggNOG" id="COG0139">
    <property type="taxonomic scope" value="Bacteria"/>
</dbReference>
<dbReference type="HOGENOM" id="CLU_048577_5_0_5"/>
<dbReference type="OrthoDB" id="9795769at2"/>
<dbReference type="UniPathway" id="UPA00031">
    <property type="reaction ID" value="UER00008"/>
</dbReference>
<dbReference type="GO" id="GO:0005737">
    <property type="term" value="C:cytoplasm"/>
    <property type="evidence" value="ECO:0007669"/>
    <property type="project" value="UniProtKB-SubCell"/>
</dbReference>
<dbReference type="GO" id="GO:0000287">
    <property type="term" value="F:magnesium ion binding"/>
    <property type="evidence" value="ECO:0007669"/>
    <property type="project" value="UniProtKB-UniRule"/>
</dbReference>
<dbReference type="GO" id="GO:0004635">
    <property type="term" value="F:phosphoribosyl-AMP cyclohydrolase activity"/>
    <property type="evidence" value="ECO:0007669"/>
    <property type="project" value="UniProtKB-UniRule"/>
</dbReference>
<dbReference type="GO" id="GO:0008270">
    <property type="term" value="F:zinc ion binding"/>
    <property type="evidence" value="ECO:0007669"/>
    <property type="project" value="UniProtKB-UniRule"/>
</dbReference>
<dbReference type="GO" id="GO:0000105">
    <property type="term" value="P:L-histidine biosynthetic process"/>
    <property type="evidence" value="ECO:0007669"/>
    <property type="project" value="UniProtKB-UniRule"/>
</dbReference>
<dbReference type="FunFam" id="3.10.20.810:FF:000001">
    <property type="entry name" value="Histidine biosynthesis bifunctional protein HisIE"/>
    <property type="match status" value="1"/>
</dbReference>
<dbReference type="Gene3D" id="4.10.80.70">
    <property type="match status" value="1"/>
</dbReference>
<dbReference type="Gene3D" id="3.10.20.810">
    <property type="entry name" value="Phosphoribosyl-AMP cyclohydrolase"/>
    <property type="match status" value="1"/>
</dbReference>
<dbReference type="HAMAP" id="MF_01021">
    <property type="entry name" value="HisI"/>
    <property type="match status" value="1"/>
</dbReference>
<dbReference type="InterPro" id="IPR026660">
    <property type="entry name" value="PRA-CH"/>
</dbReference>
<dbReference type="InterPro" id="IPR002496">
    <property type="entry name" value="PRib_AMP_CycHydrolase_dom"/>
</dbReference>
<dbReference type="InterPro" id="IPR038019">
    <property type="entry name" value="PRib_AMP_CycHydrolase_sf"/>
</dbReference>
<dbReference type="NCBIfam" id="NF000768">
    <property type="entry name" value="PRK00051.1"/>
    <property type="match status" value="1"/>
</dbReference>
<dbReference type="PANTHER" id="PTHR42945">
    <property type="entry name" value="HISTIDINE BIOSYNTHESIS BIFUNCTIONAL PROTEIN"/>
    <property type="match status" value="1"/>
</dbReference>
<dbReference type="PANTHER" id="PTHR42945:SF1">
    <property type="entry name" value="HISTIDINE BIOSYNTHESIS BIFUNCTIONAL PROTEIN HIS7"/>
    <property type="match status" value="1"/>
</dbReference>
<dbReference type="Pfam" id="PF01502">
    <property type="entry name" value="PRA-CH"/>
    <property type="match status" value="1"/>
</dbReference>
<dbReference type="SUPFAM" id="SSF141734">
    <property type="entry name" value="HisI-like"/>
    <property type="match status" value="1"/>
</dbReference>
<organism>
    <name type="scientific">Rhodopseudomonas palustris (strain BisA53)</name>
    <dbReference type="NCBI Taxonomy" id="316055"/>
    <lineage>
        <taxon>Bacteria</taxon>
        <taxon>Pseudomonadati</taxon>
        <taxon>Pseudomonadota</taxon>
        <taxon>Alphaproteobacteria</taxon>
        <taxon>Hyphomicrobiales</taxon>
        <taxon>Nitrobacteraceae</taxon>
        <taxon>Rhodopseudomonas</taxon>
    </lineage>
</organism>
<protein>
    <recommendedName>
        <fullName evidence="1">Phosphoribosyl-AMP cyclohydrolase</fullName>
        <shortName evidence="1">PRA-CH</shortName>
        <ecNumber evidence="1">3.5.4.19</ecNumber>
    </recommendedName>
</protein>
<proteinExistence type="inferred from homology"/>
<evidence type="ECO:0000255" key="1">
    <source>
        <dbReference type="HAMAP-Rule" id="MF_01021"/>
    </source>
</evidence>
<gene>
    <name evidence="1" type="primary">hisI</name>
    <name type="ordered locus">RPE_2349</name>
</gene>
<reference key="1">
    <citation type="submission" date="2006-09" db="EMBL/GenBank/DDBJ databases">
        <title>Complete sequence of Rhodopseudomonas palustris BisA53.</title>
        <authorList>
            <consortium name="US DOE Joint Genome Institute"/>
            <person name="Copeland A."/>
            <person name="Lucas S."/>
            <person name="Lapidus A."/>
            <person name="Barry K."/>
            <person name="Detter J.C."/>
            <person name="Glavina del Rio T."/>
            <person name="Hammon N."/>
            <person name="Israni S."/>
            <person name="Dalin E."/>
            <person name="Tice H."/>
            <person name="Pitluck S."/>
            <person name="Chain P."/>
            <person name="Malfatti S."/>
            <person name="Shin M."/>
            <person name="Vergez L."/>
            <person name="Schmutz J."/>
            <person name="Larimer F."/>
            <person name="Land M."/>
            <person name="Hauser L."/>
            <person name="Pelletier D.A."/>
            <person name="Kyrpides N."/>
            <person name="Kim E."/>
            <person name="Harwood C.S."/>
            <person name="Oda Y."/>
            <person name="Richardson P."/>
        </authorList>
    </citation>
    <scope>NUCLEOTIDE SEQUENCE [LARGE SCALE GENOMIC DNA]</scope>
    <source>
        <strain>BisA53</strain>
    </source>
</reference>
<feature type="chain" id="PRO_0000319710" description="Phosphoribosyl-AMP cyclohydrolase">
    <location>
        <begin position="1"/>
        <end position="147"/>
    </location>
</feature>
<feature type="binding site" evidence="1">
    <location>
        <position position="91"/>
    </location>
    <ligand>
        <name>Mg(2+)</name>
        <dbReference type="ChEBI" id="CHEBI:18420"/>
    </ligand>
</feature>
<feature type="binding site" evidence="1">
    <location>
        <position position="92"/>
    </location>
    <ligand>
        <name>Zn(2+)</name>
        <dbReference type="ChEBI" id="CHEBI:29105"/>
        <note>ligand shared between dimeric partners</note>
    </ligand>
</feature>
<feature type="binding site" evidence="1">
    <location>
        <position position="93"/>
    </location>
    <ligand>
        <name>Mg(2+)</name>
        <dbReference type="ChEBI" id="CHEBI:18420"/>
    </ligand>
</feature>
<feature type="binding site" evidence="1">
    <location>
        <position position="95"/>
    </location>
    <ligand>
        <name>Mg(2+)</name>
        <dbReference type="ChEBI" id="CHEBI:18420"/>
    </ligand>
</feature>
<feature type="binding site" evidence="1">
    <location>
        <position position="109"/>
    </location>
    <ligand>
        <name>Zn(2+)</name>
        <dbReference type="ChEBI" id="CHEBI:29105"/>
        <note>ligand shared between dimeric partners</note>
    </ligand>
</feature>
<feature type="binding site" evidence="1">
    <location>
        <position position="116"/>
    </location>
    <ligand>
        <name>Zn(2+)</name>
        <dbReference type="ChEBI" id="CHEBI:29105"/>
        <note>ligand shared between dimeric partners</note>
    </ligand>
</feature>
<name>HIS3_RHOP5</name>
<comment type="function">
    <text evidence="1">Catalyzes the hydrolysis of the adenine ring of phosphoribosyl-AMP.</text>
</comment>
<comment type="catalytic activity">
    <reaction evidence="1">
        <text>1-(5-phospho-beta-D-ribosyl)-5'-AMP + H2O = 1-(5-phospho-beta-D-ribosyl)-5-[(5-phospho-beta-D-ribosylamino)methylideneamino]imidazole-4-carboxamide</text>
        <dbReference type="Rhea" id="RHEA:20049"/>
        <dbReference type="ChEBI" id="CHEBI:15377"/>
        <dbReference type="ChEBI" id="CHEBI:58435"/>
        <dbReference type="ChEBI" id="CHEBI:59457"/>
        <dbReference type="EC" id="3.5.4.19"/>
    </reaction>
</comment>
<comment type="cofactor">
    <cofactor evidence="1">
        <name>Mg(2+)</name>
        <dbReference type="ChEBI" id="CHEBI:18420"/>
    </cofactor>
    <text evidence="1">Binds 1 Mg(2+) ion per subunit.</text>
</comment>
<comment type="cofactor">
    <cofactor evidence="1">
        <name>Zn(2+)</name>
        <dbReference type="ChEBI" id="CHEBI:29105"/>
    </cofactor>
    <text evidence="1">Binds 1 zinc ion per subunit.</text>
</comment>
<comment type="pathway">
    <text evidence="1">Amino-acid biosynthesis; L-histidine biosynthesis; L-histidine from 5-phospho-alpha-D-ribose 1-diphosphate: step 3/9.</text>
</comment>
<comment type="subunit">
    <text evidence="1">Homodimer.</text>
</comment>
<comment type="subcellular location">
    <subcellularLocation>
        <location evidence="1">Cytoplasm</location>
    </subcellularLocation>
</comment>
<comment type="similarity">
    <text evidence="1">Belongs to the PRA-CH family.</text>
</comment>
<accession>Q07P45</accession>
<keyword id="KW-0028">Amino-acid biosynthesis</keyword>
<keyword id="KW-0963">Cytoplasm</keyword>
<keyword id="KW-0368">Histidine biosynthesis</keyword>
<keyword id="KW-0378">Hydrolase</keyword>
<keyword id="KW-0460">Magnesium</keyword>
<keyword id="KW-0479">Metal-binding</keyword>
<keyword id="KW-0862">Zinc</keyword>
<sequence length="147" mass="16121">MSASSPSSAAPDDVEEGLVLRPKFDANGLITCVTTDATSGDVLMVAFMNAEALQKTIDSGDAWYFSRSRAKLWRKGESSGLVQKVLEMRLDCDQDAVWIKVEQGGGAACHTGRRSCFYRRIDRDDTGAPLLTPVDAERLFDPAKVYR</sequence>